<accession>Q86KP5</accession>
<accession>Q550V4</accession>
<comment type="subcellular location">
    <subcellularLocation>
        <location evidence="3">Membrane</location>
        <topology evidence="3">Multi-pass membrane protein</topology>
    </subcellularLocation>
</comment>
<name>MSP_DICDI</name>
<organism>
    <name type="scientific">Dictyostelium discoideum</name>
    <name type="common">Social amoeba</name>
    <dbReference type="NCBI Taxonomy" id="44689"/>
    <lineage>
        <taxon>Eukaryota</taxon>
        <taxon>Amoebozoa</taxon>
        <taxon>Evosea</taxon>
        <taxon>Eumycetozoa</taxon>
        <taxon>Dictyostelia</taxon>
        <taxon>Dictyosteliales</taxon>
        <taxon>Dictyosteliaceae</taxon>
        <taxon>Dictyostelium</taxon>
    </lineage>
</organism>
<feature type="chain" id="PRO_0000370854" description="Membrane selenoprotein">
    <location>
        <begin position="1"/>
        <end position="243"/>
    </location>
</feature>
<feature type="transmembrane region" description="Helical" evidence="1">
    <location>
        <begin position="74"/>
        <end position="94"/>
    </location>
</feature>
<feature type="transmembrane region" description="Helical" evidence="1">
    <location>
        <begin position="102"/>
        <end position="122"/>
    </location>
</feature>
<feature type="transmembrane region" description="Helical" evidence="1">
    <location>
        <begin position="144"/>
        <end position="164"/>
    </location>
</feature>
<feature type="transmembrane region" description="Helical" evidence="1">
    <location>
        <begin position="199"/>
        <end position="219"/>
    </location>
</feature>
<feature type="region of interest" description="Disordered" evidence="2">
    <location>
        <begin position="12"/>
        <end position="63"/>
    </location>
</feature>
<feature type="compositionally biased region" description="Polar residues" evidence="2">
    <location>
        <begin position="30"/>
        <end position="43"/>
    </location>
</feature>
<feature type="compositionally biased region" description="Polar residues" evidence="2">
    <location>
        <begin position="53"/>
        <end position="63"/>
    </location>
</feature>
<feature type="non-standard amino acid" description="Selenocysteine">
    <location>
        <position position="20"/>
    </location>
</feature>
<feature type="non-standard amino acid" description="Selenocysteine">
    <location>
        <position position="88"/>
    </location>
</feature>
<gene>
    <name type="primary">msp</name>
    <name type="ORF">DDB_G0277015</name>
</gene>
<dbReference type="EMBL" id="AAFI02000019">
    <property type="protein sequence ID" value="EAL69009.2"/>
    <property type="molecule type" value="Genomic_DNA"/>
</dbReference>
<dbReference type="RefSeq" id="XP_642828.2">
    <property type="nucleotide sequence ID" value="XM_637736.2"/>
</dbReference>
<dbReference type="STRING" id="44689.Q86KP5"/>
<dbReference type="PaxDb" id="44689-DDB0304589"/>
<dbReference type="EnsemblProtists" id="EAL69009">
    <property type="protein sequence ID" value="EAL69009"/>
    <property type="gene ID" value="DDB_G0277015"/>
</dbReference>
<dbReference type="GeneID" id="8620691"/>
<dbReference type="KEGG" id="ddi:DDB_G0277015"/>
<dbReference type="dictyBase" id="DDB_G0277015">
    <property type="gene designation" value="msp"/>
</dbReference>
<dbReference type="VEuPathDB" id="AmoebaDB:DDB_G0277015"/>
<dbReference type="eggNOG" id="ENOG502SFFE">
    <property type="taxonomic scope" value="Eukaryota"/>
</dbReference>
<dbReference type="HOGENOM" id="CLU_1144336_0_0_1"/>
<dbReference type="InParanoid" id="Q86KP5"/>
<dbReference type="OMA" id="AAYRPGC"/>
<dbReference type="PRO" id="PR:Q86KP5"/>
<dbReference type="Proteomes" id="UP000002195">
    <property type="component" value="Chromosome 2"/>
</dbReference>
<dbReference type="GO" id="GO:0016020">
    <property type="term" value="C:membrane"/>
    <property type="evidence" value="ECO:0007669"/>
    <property type="project" value="UniProtKB-SubCell"/>
</dbReference>
<dbReference type="GO" id="GO:0016259">
    <property type="term" value="P:selenocysteine metabolic process"/>
    <property type="evidence" value="ECO:0000314"/>
    <property type="project" value="dictyBase"/>
</dbReference>
<evidence type="ECO:0000255" key="1"/>
<evidence type="ECO:0000256" key="2">
    <source>
        <dbReference type="SAM" id="MobiDB-lite"/>
    </source>
</evidence>
<evidence type="ECO:0000305" key="3"/>
<protein>
    <recommendedName>
        <fullName>Membrane selenoprotein</fullName>
    </recommendedName>
</protein>
<reference key="1">
    <citation type="journal article" date="2002" name="Nature">
        <title>Sequence and analysis of chromosome 2 of Dictyostelium discoideum.</title>
        <authorList>
            <person name="Gloeckner G."/>
            <person name="Eichinger L."/>
            <person name="Szafranski K."/>
            <person name="Pachebat J.A."/>
            <person name="Bankier A.T."/>
            <person name="Dear P.H."/>
            <person name="Lehmann R."/>
            <person name="Baumgart C."/>
            <person name="Parra G."/>
            <person name="Abril J.F."/>
            <person name="Guigo R."/>
            <person name="Kumpf K."/>
            <person name="Tunggal B."/>
            <person name="Cox E.C."/>
            <person name="Quail M.A."/>
            <person name="Platzer M."/>
            <person name="Rosenthal A."/>
            <person name="Noegel A.A."/>
        </authorList>
    </citation>
    <scope>NUCLEOTIDE SEQUENCE [LARGE SCALE GENOMIC DNA]</scope>
    <source>
        <strain>AX4</strain>
    </source>
</reference>
<reference key="2">
    <citation type="journal article" date="2005" name="Nature">
        <title>The genome of the social amoeba Dictyostelium discoideum.</title>
        <authorList>
            <person name="Eichinger L."/>
            <person name="Pachebat J.A."/>
            <person name="Gloeckner G."/>
            <person name="Rajandream M.A."/>
            <person name="Sucgang R."/>
            <person name="Berriman M."/>
            <person name="Song J."/>
            <person name="Olsen R."/>
            <person name="Szafranski K."/>
            <person name="Xu Q."/>
            <person name="Tunggal B."/>
            <person name="Kummerfeld S."/>
            <person name="Madera M."/>
            <person name="Konfortov B.A."/>
            <person name="Rivero F."/>
            <person name="Bankier A.T."/>
            <person name="Lehmann R."/>
            <person name="Hamlin N."/>
            <person name="Davies R."/>
            <person name="Gaudet P."/>
            <person name="Fey P."/>
            <person name="Pilcher K."/>
            <person name="Chen G."/>
            <person name="Saunders D."/>
            <person name="Sodergren E.J."/>
            <person name="Davis P."/>
            <person name="Kerhornou A."/>
            <person name="Nie X."/>
            <person name="Hall N."/>
            <person name="Anjard C."/>
            <person name="Hemphill L."/>
            <person name="Bason N."/>
            <person name="Farbrother P."/>
            <person name="Desany B."/>
            <person name="Just E."/>
            <person name="Morio T."/>
            <person name="Rost R."/>
            <person name="Churcher C.M."/>
            <person name="Cooper J."/>
            <person name="Haydock S."/>
            <person name="van Driessche N."/>
            <person name="Cronin A."/>
            <person name="Goodhead I."/>
            <person name="Muzny D.M."/>
            <person name="Mourier T."/>
            <person name="Pain A."/>
            <person name="Lu M."/>
            <person name="Harper D."/>
            <person name="Lindsay R."/>
            <person name="Hauser H."/>
            <person name="James K.D."/>
            <person name="Quiles M."/>
            <person name="Madan Babu M."/>
            <person name="Saito T."/>
            <person name="Buchrieser C."/>
            <person name="Wardroper A."/>
            <person name="Felder M."/>
            <person name="Thangavelu M."/>
            <person name="Johnson D."/>
            <person name="Knights A."/>
            <person name="Loulseged H."/>
            <person name="Mungall K.L."/>
            <person name="Oliver K."/>
            <person name="Price C."/>
            <person name="Quail M.A."/>
            <person name="Urushihara H."/>
            <person name="Hernandez J."/>
            <person name="Rabbinowitsch E."/>
            <person name="Steffen D."/>
            <person name="Sanders M."/>
            <person name="Ma J."/>
            <person name="Kohara Y."/>
            <person name="Sharp S."/>
            <person name="Simmonds M.N."/>
            <person name="Spiegler S."/>
            <person name="Tivey A."/>
            <person name="Sugano S."/>
            <person name="White B."/>
            <person name="Walker D."/>
            <person name="Woodward J.R."/>
            <person name="Winckler T."/>
            <person name="Tanaka Y."/>
            <person name="Shaulsky G."/>
            <person name="Schleicher M."/>
            <person name="Weinstock G.M."/>
            <person name="Rosenthal A."/>
            <person name="Cox E.C."/>
            <person name="Chisholm R.L."/>
            <person name="Gibbs R.A."/>
            <person name="Loomis W.F."/>
            <person name="Platzer M."/>
            <person name="Kay R.R."/>
            <person name="Williams J.G."/>
            <person name="Dear P.H."/>
            <person name="Noegel A.A."/>
            <person name="Barrell B.G."/>
            <person name="Kuspa A."/>
        </authorList>
    </citation>
    <scope>NUCLEOTIDE SEQUENCE [LARGE SCALE GENOMIC DNA]</scope>
    <source>
        <strain>AX4</strain>
    </source>
</reference>
<keyword id="KW-0472">Membrane</keyword>
<keyword id="KW-1185">Reference proteome</keyword>
<keyword id="KW-0712">Selenocysteine</keyword>
<keyword id="KW-0812">Transmembrane</keyword>
<keyword id="KW-1133">Transmembrane helix</keyword>
<proteinExistence type="predicted"/>
<sequence length="243" mass="26526">MSLFNLPKVDLGEDCEGGVUARPSSSSSSINNASDESTPLISKTNDEEKANIGISSTSNSPQEEQTKKPLFISILTLLISIPALVGSUCWPVLIASLSGVAVSAGSVELAHSLTFAITLSILSNLAQYHFHKCKKRPSDRGHWIKFGPFYLTAIAVPLATFDILRHILVDNSIWTIHSFISPAAYRPGCENENITCLSVMGWFSAIVFTYTGYACLLVGTIWAADLIPKIKKVWTQLRPSKKN</sequence>